<dbReference type="EC" id="4.2.3.5" evidence="1"/>
<dbReference type="EMBL" id="CP000708">
    <property type="protein sequence ID" value="ABQ60200.1"/>
    <property type="molecule type" value="Genomic_DNA"/>
</dbReference>
<dbReference type="RefSeq" id="WP_002963585.1">
    <property type="nucleotide sequence ID" value="NC_009505.1"/>
</dbReference>
<dbReference type="SMR" id="A5VP02"/>
<dbReference type="GeneID" id="97534201"/>
<dbReference type="KEGG" id="bov:BOV_0435"/>
<dbReference type="HOGENOM" id="CLU_034547_0_0_5"/>
<dbReference type="PhylomeDB" id="A5VP02"/>
<dbReference type="UniPathway" id="UPA00053">
    <property type="reaction ID" value="UER00090"/>
</dbReference>
<dbReference type="PRO" id="PR:A5VP02"/>
<dbReference type="Proteomes" id="UP000006383">
    <property type="component" value="Chromosome I"/>
</dbReference>
<dbReference type="GO" id="GO:0005829">
    <property type="term" value="C:cytosol"/>
    <property type="evidence" value="ECO:0007669"/>
    <property type="project" value="TreeGrafter"/>
</dbReference>
<dbReference type="GO" id="GO:0004107">
    <property type="term" value="F:chorismate synthase activity"/>
    <property type="evidence" value="ECO:0007669"/>
    <property type="project" value="UniProtKB-UniRule"/>
</dbReference>
<dbReference type="GO" id="GO:0010181">
    <property type="term" value="F:FMN binding"/>
    <property type="evidence" value="ECO:0007669"/>
    <property type="project" value="TreeGrafter"/>
</dbReference>
<dbReference type="GO" id="GO:0008652">
    <property type="term" value="P:amino acid biosynthetic process"/>
    <property type="evidence" value="ECO:0007669"/>
    <property type="project" value="UniProtKB-KW"/>
</dbReference>
<dbReference type="GO" id="GO:0009073">
    <property type="term" value="P:aromatic amino acid family biosynthetic process"/>
    <property type="evidence" value="ECO:0007669"/>
    <property type="project" value="UniProtKB-KW"/>
</dbReference>
<dbReference type="GO" id="GO:0009423">
    <property type="term" value="P:chorismate biosynthetic process"/>
    <property type="evidence" value="ECO:0007669"/>
    <property type="project" value="UniProtKB-UniRule"/>
</dbReference>
<dbReference type="CDD" id="cd07304">
    <property type="entry name" value="Chorismate_synthase"/>
    <property type="match status" value="1"/>
</dbReference>
<dbReference type="Gene3D" id="3.60.150.10">
    <property type="entry name" value="Chorismate synthase AroC"/>
    <property type="match status" value="1"/>
</dbReference>
<dbReference type="HAMAP" id="MF_00300">
    <property type="entry name" value="Chorismate_synth"/>
    <property type="match status" value="1"/>
</dbReference>
<dbReference type="InterPro" id="IPR000453">
    <property type="entry name" value="Chorismate_synth"/>
</dbReference>
<dbReference type="InterPro" id="IPR035904">
    <property type="entry name" value="Chorismate_synth_AroC_sf"/>
</dbReference>
<dbReference type="InterPro" id="IPR020541">
    <property type="entry name" value="Chorismate_synthase_CS"/>
</dbReference>
<dbReference type="NCBIfam" id="TIGR00033">
    <property type="entry name" value="aroC"/>
    <property type="match status" value="1"/>
</dbReference>
<dbReference type="NCBIfam" id="NF003793">
    <property type="entry name" value="PRK05382.1"/>
    <property type="match status" value="1"/>
</dbReference>
<dbReference type="PANTHER" id="PTHR21085">
    <property type="entry name" value="CHORISMATE SYNTHASE"/>
    <property type="match status" value="1"/>
</dbReference>
<dbReference type="PANTHER" id="PTHR21085:SF0">
    <property type="entry name" value="CHORISMATE SYNTHASE"/>
    <property type="match status" value="1"/>
</dbReference>
<dbReference type="Pfam" id="PF01264">
    <property type="entry name" value="Chorismate_synt"/>
    <property type="match status" value="1"/>
</dbReference>
<dbReference type="PIRSF" id="PIRSF001456">
    <property type="entry name" value="Chorismate_synth"/>
    <property type="match status" value="1"/>
</dbReference>
<dbReference type="SUPFAM" id="SSF103263">
    <property type="entry name" value="Chorismate synthase, AroC"/>
    <property type="match status" value="1"/>
</dbReference>
<dbReference type="PROSITE" id="PS00787">
    <property type="entry name" value="CHORISMATE_SYNTHASE_1"/>
    <property type="match status" value="1"/>
</dbReference>
<dbReference type="PROSITE" id="PS00788">
    <property type="entry name" value="CHORISMATE_SYNTHASE_2"/>
    <property type="match status" value="1"/>
</dbReference>
<dbReference type="PROSITE" id="PS00789">
    <property type="entry name" value="CHORISMATE_SYNTHASE_3"/>
    <property type="match status" value="1"/>
</dbReference>
<gene>
    <name evidence="1" type="primary">aroC</name>
    <name type="ordered locus">BOV_0435</name>
</gene>
<comment type="function">
    <text evidence="1">Catalyzes the anti-1,4-elimination of the C-3 phosphate and the C-6 proR hydrogen from 5-enolpyruvylshikimate-3-phosphate (EPSP) to yield chorismate, which is the branch point compound that serves as the starting substrate for the three terminal pathways of aromatic amino acid biosynthesis. This reaction introduces a second double bond into the aromatic ring system.</text>
</comment>
<comment type="catalytic activity">
    <reaction evidence="1">
        <text>5-O-(1-carboxyvinyl)-3-phosphoshikimate = chorismate + phosphate</text>
        <dbReference type="Rhea" id="RHEA:21020"/>
        <dbReference type="ChEBI" id="CHEBI:29748"/>
        <dbReference type="ChEBI" id="CHEBI:43474"/>
        <dbReference type="ChEBI" id="CHEBI:57701"/>
        <dbReference type="EC" id="4.2.3.5"/>
    </reaction>
</comment>
<comment type="cofactor">
    <cofactor evidence="1">
        <name>FMNH2</name>
        <dbReference type="ChEBI" id="CHEBI:57618"/>
    </cofactor>
    <text evidence="1">Reduced FMN (FMNH(2)).</text>
</comment>
<comment type="pathway">
    <text evidence="1">Metabolic intermediate biosynthesis; chorismate biosynthesis; chorismate from D-erythrose 4-phosphate and phosphoenolpyruvate: step 7/7.</text>
</comment>
<comment type="subunit">
    <text evidence="1">Homotetramer.</text>
</comment>
<comment type="similarity">
    <text evidence="1">Belongs to the chorismate synthase family.</text>
</comment>
<keyword id="KW-0028">Amino-acid biosynthesis</keyword>
<keyword id="KW-0057">Aromatic amino acid biosynthesis</keyword>
<keyword id="KW-0274">FAD</keyword>
<keyword id="KW-0285">Flavoprotein</keyword>
<keyword id="KW-0288">FMN</keyword>
<keyword id="KW-0456">Lyase</keyword>
<keyword id="KW-0521">NADP</keyword>
<accession>A5VP02</accession>
<proteinExistence type="inferred from homology"/>
<feature type="chain" id="PRO_1000022464" description="Chorismate synthase">
    <location>
        <begin position="1"/>
        <end position="364"/>
    </location>
</feature>
<feature type="binding site" evidence="1">
    <location>
        <position position="48"/>
    </location>
    <ligand>
        <name>NADP(+)</name>
        <dbReference type="ChEBI" id="CHEBI:58349"/>
    </ligand>
</feature>
<feature type="binding site" evidence="1">
    <location>
        <begin position="131"/>
        <end position="133"/>
    </location>
    <ligand>
        <name>FMN</name>
        <dbReference type="ChEBI" id="CHEBI:58210"/>
    </ligand>
</feature>
<feature type="binding site" evidence="1">
    <location>
        <begin position="243"/>
        <end position="244"/>
    </location>
    <ligand>
        <name>FMN</name>
        <dbReference type="ChEBI" id="CHEBI:58210"/>
    </ligand>
</feature>
<feature type="binding site" evidence="1">
    <location>
        <position position="288"/>
    </location>
    <ligand>
        <name>FMN</name>
        <dbReference type="ChEBI" id="CHEBI:58210"/>
    </ligand>
</feature>
<feature type="binding site" evidence="1">
    <location>
        <begin position="303"/>
        <end position="307"/>
    </location>
    <ligand>
        <name>FMN</name>
        <dbReference type="ChEBI" id="CHEBI:58210"/>
    </ligand>
</feature>
<feature type="binding site" evidence="1">
    <location>
        <position position="329"/>
    </location>
    <ligand>
        <name>FMN</name>
        <dbReference type="ChEBI" id="CHEBI:58210"/>
    </ligand>
</feature>
<evidence type="ECO:0000255" key="1">
    <source>
        <dbReference type="HAMAP-Rule" id="MF_00300"/>
    </source>
</evidence>
<sequence>MSHNSFGHLFRVTTWGESHGLALGCVVDGCPPGITFTEAEIQSFLDKRKPGQSKYTTQRREPDQVRVLSGVLLGEDGVTMTTTGTPISMMIENTDQRSKDYGEIARQYRPGHADYAYDVKYGIRDYRGGGRSSARETAARVAAGAIARKVVPGLEVRGALVSIGAHDIDRSRWNWAEVDNNPFFTPDAGSVEVFADYLDGIRKNGSSVGAIIEIVAEGVPAGIGAPIYGKLDQDIASYLMSINAVKGVEIGNGFEAARLTGEENADEMRMGNDGKPIFLSNHAGGVLGGIATGAPVVARFAVKPTSSILTPRRSIDKDGNEVDVMTRGRHDPCVGIRAVPIGEAMVACAIADHYLRHRGQTGRV</sequence>
<name>AROC_BRUO2</name>
<organism>
    <name type="scientific">Brucella ovis (strain ATCC 25840 / 63/290 / NCTC 10512)</name>
    <dbReference type="NCBI Taxonomy" id="444178"/>
    <lineage>
        <taxon>Bacteria</taxon>
        <taxon>Pseudomonadati</taxon>
        <taxon>Pseudomonadota</taxon>
        <taxon>Alphaproteobacteria</taxon>
        <taxon>Hyphomicrobiales</taxon>
        <taxon>Brucellaceae</taxon>
        <taxon>Brucella/Ochrobactrum group</taxon>
        <taxon>Brucella</taxon>
    </lineage>
</organism>
<reference key="1">
    <citation type="journal article" date="2009" name="PLoS ONE">
        <title>Genome degradation in Brucella ovis corresponds with narrowing of its host range and tissue tropism.</title>
        <authorList>
            <person name="Tsolis R.M."/>
            <person name="Seshadri R."/>
            <person name="Santos R.L."/>
            <person name="Sangari F.J."/>
            <person name="Lobo J.M."/>
            <person name="de Jong M.F."/>
            <person name="Ren Q."/>
            <person name="Myers G."/>
            <person name="Brinkac L.M."/>
            <person name="Nelson W.C."/>
            <person name="Deboy R.T."/>
            <person name="Angiuoli S."/>
            <person name="Khouri H."/>
            <person name="Dimitrov G."/>
            <person name="Robinson J.R."/>
            <person name="Mulligan S."/>
            <person name="Walker R.L."/>
            <person name="Elzer P.E."/>
            <person name="Hassan K.A."/>
            <person name="Paulsen I.T."/>
        </authorList>
    </citation>
    <scope>NUCLEOTIDE SEQUENCE [LARGE SCALE GENOMIC DNA]</scope>
    <source>
        <strain>ATCC 25840 / 63/290 / NCTC 10512</strain>
    </source>
</reference>
<protein>
    <recommendedName>
        <fullName evidence="1">Chorismate synthase</fullName>
        <shortName evidence="1">CS</shortName>
        <ecNumber evidence="1">4.2.3.5</ecNumber>
    </recommendedName>
    <alternativeName>
        <fullName evidence="1">5-enolpyruvylshikimate-3-phosphate phospholyase</fullName>
    </alternativeName>
</protein>